<comment type="function">
    <text evidence="1">Involved in the binding of tRNA to the ribosomes.</text>
</comment>
<comment type="subunit">
    <text evidence="1">Part of the 30S ribosomal subunit.</text>
</comment>
<comment type="similarity">
    <text evidence="1">Belongs to the universal ribosomal protein uS10 family.</text>
</comment>
<reference key="1">
    <citation type="journal article" date="2009" name="BMC Genomics">
        <title>Evidence for niche adaptation in the genome of the bovine pathogen Streptococcus uberis.</title>
        <authorList>
            <person name="Ward P.N."/>
            <person name="Holden M.T.G."/>
            <person name="Leigh J.A."/>
            <person name="Lennard N."/>
            <person name="Bignell A."/>
            <person name="Barron A."/>
            <person name="Clark L."/>
            <person name="Quail M.A."/>
            <person name="Woodward J."/>
            <person name="Barrell B.G."/>
            <person name="Egan S.A."/>
            <person name="Field T.R."/>
            <person name="Maskell D."/>
            <person name="Kehoe M."/>
            <person name="Dowson C.G."/>
            <person name="Chanter N."/>
            <person name="Whatmore A.M."/>
            <person name="Bentley S.D."/>
            <person name="Parkhill J."/>
        </authorList>
    </citation>
    <scope>NUCLEOTIDE SEQUENCE [LARGE SCALE GENOMIC DNA]</scope>
    <source>
        <strain>ATCC BAA-854 / 0140J</strain>
    </source>
</reference>
<evidence type="ECO:0000255" key="1">
    <source>
        <dbReference type="HAMAP-Rule" id="MF_00508"/>
    </source>
</evidence>
<evidence type="ECO:0000305" key="2"/>
<accession>B9DSU9</accession>
<gene>
    <name evidence="1" type="primary">rpsJ</name>
    <name type="ordered locus">SUB0067</name>
</gene>
<sequence>MANKKIRIRLKAYEHRTLDTAAEKIVETATRTGATVAGPVPLPTERSLYTIIRATHKYKDSREQFEMRTHKRLIDIVNPTQKTVDALMKLDLPSGVNVEIKL</sequence>
<organism>
    <name type="scientific">Streptococcus uberis (strain ATCC BAA-854 / 0140J)</name>
    <dbReference type="NCBI Taxonomy" id="218495"/>
    <lineage>
        <taxon>Bacteria</taxon>
        <taxon>Bacillati</taxon>
        <taxon>Bacillota</taxon>
        <taxon>Bacilli</taxon>
        <taxon>Lactobacillales</taxon>
        <taxon>Streptococcaceae</taxon>
        <taxon>Streptococcus</taxon>
    </lineage>
</organism>
<keyword id="KW-1185">Reference proteome</keyword>
<keyword id="KW-0687">Ribonucleoprotein</keyword>
<keyword id="KW-0689">Ribosomal protein</keyword>
<proteinExistence type="inferred from homology"/>
<dbReference type="EMBL" id="AM946015">
    <property type="protein sequence ID" value="CAR40438.1"/>
    <property type="molecule type" value="Genomic_DNA"/>
</dbReference>
<dbReference type="RefSeq" id="WP_003046044.1">
    <property type="nucleotide sequence ID" value="NC_012004.1"/>
</dbReference>
<dbReference type="SMR" id="B9DSU9"/>
<dbReference type="STRING" id="218495.SUB0067"/>
<dbReference type="GeneID" id="98392391"/>
<dbReference type="KEGG" id="sub:SUB0067"/>
<dbReference type="eggNOG" id="COG0051">
    <property type="taxonomic scope" value="Bacteria"/>
</dbReference>
<dbReference type="HOGENOM" id="CLU_122625_1_3_9"/>
<dbReference type="OrthoDB" id="9804464at2"/>
<dbReference type="Proteomes" id="UP000000449">
    <property type="component" value="Chromosome"/>
</dbReference>
<dbReference type="GO" id="GO:1990904">
    <property type="term" value="C:ribonucleoprotein complex"/>
    <property type="evidence" value="ECO:0007669"/>
    <property type="project" value="UniProtKB-KW"/>
</dbReference>
<dbReference type="GO" id="GO:0005840">
    <property type="term" value="C:ribosome"/>
    <property type="evidence" value="ECO:0007669"/>
    <property type="project" value="UniProtKB-KW"/>
</dbReference>
<dbReference type="GO" id="GO:0003735">
    <property type="term" value="F:structural constituent of ribosome"/>
    <property type="evidence" value="ECO:0007669"/>
    <property type="project" value="InterPro"/>
</dbReference>
<dbReference type="GO" id="GO:0000049">
    <property type="term" value="F:tRNA binding"/>
    <property type="evidence" value="ECO:0007669"/>
    <property type="project" value="UniProtKB-UniRule"/>
</dbReference>
<dbReference type="GO" id="GO:0006412">
    <property type="term" value="P:translation"/>
    <property type="evidence" value="ECO:0007669"/>
    <property type="project" value="UniProtKB-UniRule"/>
</dbReference>
<dbReference type="FunFam" id="3.30.70.600:FF:000001">
    <property type="entry name" value="30S ribosomal protein S10"/>
    <property type="match status" value="1"/>
</dbReference>
<dbReference type="Gene3D" id="3.30.70.600">
    <property type="entry name" value="Ribosomal protein S10 domain"/>
    <property type="match status" value="1"/>
</dbReference>
<dbReference type="HAMAP" id="MF_00508">
    <property type="entry name" value="Ribosomal_uS10"/>
    <property type="match status" value="1"/>
</dbReference>
<dbReference type="InterPro" id="IPR001848">
    <property type="entry name" value="Ribosomal_uS10"/>
</dbReference>
<dbReference type="InterPro" id="IPR018268">
    <property type="entry name" value="Ribosomal_uS10_CS"/>
</dbReference>
<dbReference type="InterPro" id="IPR027486">
    <property type="entry name" value="Ribosomal_uS10_dom"/>
</dbReference>
<dbReference type="InterPro" id="IPR036838">
    <property type="entry name" value="Ribosomal_uS10_dom_sf"/>
</dbReference>
<dbReference type="NCBIfam" id="NF001861">
    <property type="entry name" value="PRK00596.1"/>
    <property type="match status" value="1"/>
</dbReference>
<dbReference type="NCBIfam" id="TIGR01049">
    <property type="entry name" value="rpsJ_bact"/>
    <property type="match status" value="1"/>
</dbReference>
<dbReference type="PANTHER" id="PTHR11700">
    <property type="entry name" value="30S RIBOSOMAL PROTEIN S10 FAMILY MEMBER"/>
    <property type="match status" value="1"/>
</dbReference>
<dbReference type="Pfam" id="PF00338">
    <property type="entry name" value="Ribosomal_S10"/>
    <property type="match status" value="1"/>
</dbReference>
<dbReference type="PRINTS" id="PR00971">
    <property type="entry name" value="RIBOSOMALS10"/>
</dbReference>
<dbReference type="SMART" id="SM01403">
    <property type="entry name" value="Ribosomal_S10"/>
    <property type="match status" value="1"/>
</dbReference>
<dbReference type="SUPFAM" id="SSF54999">
    <property type="entry name" value="Ribosomal protein S10"/>
    <property type="match status" value="1"/>
</dbReference>
<dbReference type="PROSITE" id="PS00361">
    <property type="entry name" value="RIBOSOMAL_S10"/>
    <property type="match status" value="1"/>
</dbReference>
<feature type="chain" id="PRO_1000146080" description="Small ribosomal subunit protein uS10">
    <location>
        <begin position="1"/>
        <end position="102"/>
    </location>
</feature>
<protein>
    <recommendedName>
        <fullName evidence="1">Small ribosomal subunit protein uS10</fullName>
    </recommendedName>
    <alternativeName>
        <fullName evidence="2">30S ribosomal protein S10</fullName>
    </alternativeName>
</protein>
<name>RS10_STRU0</name>